<proteinExistence type="evidence at protein level"/>
<organism>
    <name type="scientific">Saccharomyces cerevisiae (strain ATCC 204508 / S288c)</name>
    <name type="common">Baker's yeast</name>
    <dbReference type="NCBI Taxonomy" id="559292"/>
    <lineage>
        <taxon>Eukaryota</taxon>
        <taxon>Fungi</taxon>
        <taxon>Dikarya</taxon>
        <taxon>Ascomycota</taxon>
        <taxon>Saccharomycotina</taxon>
        <taxon>Saccharomycetes</taxon>
        <taxon>Saccharomycetales</taxon>
        <taxon>Saccharomycetaceae</taxon>
        <taxon>Saccharomyces</taxon>
    </lineage>
</organism>
<comment type="function">
    <text evidence="2">Transaldolase is important for the balance of metabolites in the pentose-phosphate pathway.</text>
</comment>
<comment type="catalytic activity">
    <reaction evidence="2 3">
        <text>D-sedoheptulose 7-phosphate + D-glyceraldehyde 3-phosphate = D-erythrose 4-phosphate + beta-D-fructose 6-phosphate</text>
        <dbReference type="Rhea" id="RHEA:17053"/>
        <dbReference type="ChEBI" id="CHEBI:16897"/>
        <dbReference type="ChEBI" id="CHEBI:57483"/>
        <dbReference type="ChEBI" id="CHEBI:57634"/>
        <dbReference type="ChEBI" id="CHEBI:59776"/>
        <dbReference type="EC" id="2.2.1.2"/>
    </reaction>
</comment>
<comment type="pathway">
    <text evidence="6">Carbohydrate degradation; pentose phosphate pathway; D-glyceraldehyde 3-phosphate and beta-D-fructose 6-phosphate from D-ribose 5-phosphate and D-xylulose 5-phosphate (non-oxidative stage): step 2/3.</text>
</comment>
<comment type="subunit">
    <text>Homodimer.</text>
</comment>
<comment type="miscellaneous">
    <text evidence="6">Two isoenzymes seem to be encoded by the same gene.</text>
</comment>
<comment type="miscellaneous">
    <text evidence="1">Present with 53000 molecules/cell in log phase SD medium.</text>
</comment>
<comment type="similarity">
    <text evidence="5">Belongs to the transaldolase family. Type 1 subfamily.</text>
</comment>
<sequence length="335" mass="37036">MSEPAQKKQKVANNSLEQLKASGTVVVADTGDFGSIAKFQPQDSTTNPSLILAAAKQPTYAKLIDVAVEYGKKHGKTTEEQVENAVDRLLVEFGKEILKIVPGRVSTEVDARLSFDTQATIEKARHIIKLFEQEGVSKERVLIKIASTWEGIQAAKELEEKDGIHCNLTLLFSFVQAVACAEAQVTLISPFVGRILDWYKSSTGKDYKGEADPGVISVKKIYNYYKKYGYKTIVMGASFRSTDEIKNLAGVDYLTISPALLDKLMNSTEPFPRVLDPVSAKKEAGDKISYISDESKFRFDLNEDAMATEKLSEGIRKFSADIVTLFDLIEKKVTA</sequence>
<accession>P15019</accession>
<accession>D6VYZ2</accession>
<name>TAL1_YEAST</name>
<feature type="initiator methionine" description="Removed" evidence="4">
    <location>
        <position position="1"/>
    </location>
</feature>
<feature type="chain" id="PRO_0000173574" description="Transaldolase">
    <location>
        <begin position="2"/>
        <end position="335"/>
    </location>
</feature>
<feature type="active site" description="Schiff-base intermediate with substrate" evidence="7">
    <location>
        <position position="144"/>
    </location>
</feature>
<feature type="modified residue" description="N-acetylserine" evidence="4">
    <location>
        <position position="2"/>
    </location>
</feature>
<feature type="sequence conflict" description="In Ref. 1; CAA34078." evidence="5" ref="1">
    <original>I</original>
    <variation>M</variation>
    <location>
        <position position="221"/>
    </location>
</feature>
<evidence type="ECO:0000269" key="1">
    <source>
    </source>
</evidence>
<evidence type="ECO:0000269" key="2">
    <source>
    </source>
</evidence>
<evidence type="ECO:0000269" key="3">
    <source>
    </source>
</evidence>
<evidence type="ECO:0000269" key="4">
    <source>
    </source>
</evidence>
<evidence type="ECO:0000305" key="5"/>
<evidence type="ECO:0000305" key="6">
    <source>
    </source>
</evidence>
<evidence type="ECO:0000305" key="7">
    <source>
    </source>
</evidence>
<dbReference type="EC" id="2.2.1.2" evidence="2 3"/>
<dbReference type="EMBL" id="X15953">
    <property type="protein sequence ID" value="CAA34078.1"/>
    <property type="molecule type" value="Genomic_DNA"/>
</dbReference>
<dbReference type="EMBL" id="U19102">
    <property type="protein sequence ID" value="AAB67752.1"/>
    <property type="molecule type" value="Genomic_DNA"/>
</dbReference>
<dbReference type="EMBL" id="X04969">
    <property type="protein sequence ID" value="CAA28644.1"/>
    <property type="molecule type" value="Genomic_DNA"/>
</dbReference>
<dbReference type="EMBL" id="L37016">
    <property type="protein sequence ID" value="AAA64519.1"/>
    <property type="molecule type" value="Genomic_DNA"/>
</dbReference>
<dbReference type="EMBL" id="BK006945">
    <property type="protein sequence ID" value="DAA09658.1"/>
    <property type="molecule type" value="Genomic_DNA"/>
</dbReference>
<dbReference type="PIR" id="S51462">
    <property type="entry name" value="S51462"/>
</dbReference>
<dbReference type="RefSeq" id="NP_013458.1">
    <property type="nucleotide sequence ID" value="NM_001182243.1"/>
</dbReference>
<dbReference type="SMR" id="P15019"/>
<dbReference type="BioGRID" id="31616">
    <property type="interactions" value="159"/>
</dbReference>
<dbReference type="DIP" id="DIP-4980N"/>
<dbReference type="FunCoup" id="P15019">
    <property type="interactions" value="897"/>
</dbReference>
<dbReference type="IntAct" id="P15019">
    <property type="interactions" value="37"/>
</dbReference>
<dbReference type="MINT" id="P15019"/>
<dbReference type="STRING" id="4932.YLR354C"/>
<dbReference type="iPTMnet" id="P15019"/>
<dbReference type="PaxDb" id="4932-YLR354C"/>
<dbReference type="PeptideAtlas" id="P15019"/>
<dbReference type="TopDownProteomics" id="P15019"/>
<dbReference type="EnsemblFungi" id="YLR354C_mRNA">
    <property type="protein sequence ID" value="YLR354C"/>
    <property type="gene ID" value="YLR354C"/>
</dbReference>
<dbReference type="GeneID" id="851068"/>
<dbReference type="KEGG" id="sce:YLR354C"/>
<dbReference type="AGR" id="SGD:S000004346"/>
<dbReference type="SGD" id="S000004346">
    <property type="gene designation" value="TAL1"/>
</dbReference>
<dbReference type="VEuPathDB" id="FungiDB:YLR354C"/>
<dbReference type="eggNOG" id="KOG2772">
    <property type="taxonomic scope" value="Eukaryota"/>
</dbReference>
<dbReference type="GeneTree" id="ENSGT00390000017361"/>
<dbReference type="HOGENOM" id="CLU_047470_0_1_1"/>
<dbReference type="InParanoid" id="P15019"/>
<dbReference type="OMA" id="FATIKKY"/>
<dbReference type="OrthoDB" id="2015515at2759"/>
<dbReference type="BioCyc" id="YEAST:YLR354C-MONOMER"/>
<dbReference type="BRENDA" id="2.2.1.2">
    <property type="organism ID" value="984"/>
</dbReference>
<dbReference type="Reactome" id="R-SCE-163754">
    <property type="pathway name" value="Insulin effects increased synthesis of Xylulose-5-Phosphate"/>
</dbReference>
<dbReference type="Reactome" id="R-SCE-71336">
    <property type="pathway name" value="Pentose phosphate pathway"/>
</dbReference>
<dbReference type="UniPathway" id="UPA00115">
    <property type="reaction ID" value="UER00414"/>
</dbReference>
<dbReference type="BioGRID-ORCS" id="851068">
    <property type="hits" value="0 hits in 10 CRISPR screens"/>
</dbReference>
<dbReference type="PRO" id="PR:P15019"/>
<dbReference type="Proteomes" id="UP000002311">
    <property type="component" value="Chromosome XII"/>
</dbReference>
<dbReference type="RNAct" id="P15019">
    <property type="molecule type" value="protein"/>
</dbReference>
<dbReference type="GO" id="GO:0005737">
    <property type="term" value="C:cytoplasm"/>
    <property type="evidence" value="ECO:0007669"/>
    <property type="project" value="InterPro"/>
</dbReference>
<dbReference type="GO" id="GO:0005634">
    <property type="term" value="C:nucleus"/>
    <property type="evidence" value="ECO:0000314"/>
    <property type="project" value="SGD"/>
</dbReference>
<dbReference type="GO" id="GO:0004801">
    <property type="term" value="F:transaldolase activity"/>
    <property type="evidence" value="ECO:0000314"/>
    <property type="project" value="SGD"/>
</dbReference>
<dbReference type="GO" id="GO:0005975">
    <property type="term" value="P:carbohydrate metabolic process"/>
    <property type="evidence" value="ECO:0007669"/>
    <property type="project" value="InterPro"/>
</dbReference>
<dbReference type="GO" id="GO:0006098">
    <property type="term" value="P:pentose-phosphate shunt"/>
    <property type="evidence" value="ECO:0000315"/>
    <property type="project" value="SGD"/>
</dbReference>
<dbReference type="GO" id="GO:0009052">
    <property type="term" value="P:pentose-phosphate shunt, non-oxidative branch"/>
    <property type="evidence" value="ECO:0000318"/>
    <property type="project" value="GO_Central"/>
</dbReference>
<dbReference type="CDD" id="cd00957">
    <property type="entry name" value="Transaldolase_TalAB"/>
    <property type="match status" value="1"/>
</dbReference>
<dbReference type="FunFam" id="3.20.20.70:FF:000088">
    <property type="entry name" value="Transaldolase"/>
    <property type="match status" value="1"/>
</dbReference>
<dbReference type="Gene3D" id="3.20.20.70">
    <property type="entry name" value="Aldolase class I"/>
    <property type="match status" value="1"/>
</dbReference>
<dbReference type="HAMAP" id="MF_00492">
    <property type="entry name" value="Transaldolase_1"/>
    <property type="match status" value="1"/>
</dbReference>
<dbReference type="InterPro" id="IPR013785">
    <property type="entry name" value="Aldolase_TIM"/>
</dbReference>
<dbReference type="InterPro" id="IPR001585">
    <property type="entry name" value="TAL/FSA"/>
</dbReference>
<dbReference type="InterPro" id="IPR004730">
    <property type="entry name" value="Transaldolase_1"/>
</dbReference>
<dbReference type="InterPro" id="IPR018225">
    <property type="entry name" value="Transaldolase_AS"/>
</dbReference>
<dbReference type="NCBIfam" id="NF009001">
    <property type="entry name" value="PRK12346.1"/>
    <property type="match status" value="1"/>
</dbReference>
<dbReference type="NCBIfam" id="TIGR00874">
    <property type="entry name" value="talAB"/>
    <property type="match status" value="1"/>
</dbReference>
<dbReference type="PANTHER" id="PTHR10683">
    <property type="entry name" value="TRANSALDOLASE"/>
    <property type="match status" value="1"/>
</dbReference>
<dbReference type="PANTHER" id="PTHR10683:SF18">
    <property type="entry name" value="TRANSALDOLASE"/>
    <property type="match status" value="1"/>
</dbReference>
<dbReference type="Pfam" id="PF00923">
    <property type="entry name" value="TAL_FSA"/>
    <property type="match status" value="1"/>
</dbReference>
<dbReference type="SUPFAM" id="SSF51569">
    <property type="entry name" value="Aldolase"/>
    <property type="match status" value="1"/>
</dbReference>
<dbReference type="PROSITE" id="PS01054">
    <property type="entry name" value="TRANSALDOLASE_1"/>
    <property type="match status" value="1"/>
</dbReference>
<dbReference type="PROSITE" id="PS00958">
    <property type="entry name" value="TRANSALDOLASE_2"/>
    <property type="match status" value="1"/>
</dbReference>
<reference key="1">
    <citation type="journal article" date="1990" name="Eur. J. Biochem.">
        <title>Molecular analysis of the structural gene for yeast transaldolase.</title>
        <authorList>
            <person name="Schaaff I."/>
            <person name="Hohmann S."/>
            <person name="Zimmermann F.K."/>
        </authorList>
    </citation>
    <scope>NUCLEOTIDE SEQUENCE [GENOMIC DNA]</scope>
    <scope>FUNCTION</scope>
    <scope>CATALYTIC ACTIVITY</scope>
    <source>
        <strain>ATCC 204510 / AB320</strain>
    </source>
</reference>
<reference key="2">
    <citation type="journal article" date="1997" name="Nature">
        <title>The nucleotide sequence of Saccharomyces cerevisiae chromosome XII.</title>
        <authorList>
            <person name="Johnston M."/>
            <person name="Hillier L.W."/>
            <person name="Riles L."/>
            <person name="Albermann K."/>
            <person name="Andre B."/>
            <person name="Ansorge W."/>
            <person name="Benes V."/>
            <person name="Brueckner M."/>
            <person name="Delius H."/>
            <person name="Dubois E."/>
            <person name="Duesterhoeft A."/>
            <person name="Entian K.-D."/>
            <person name="Floeth M."/>
            <person name="Goffeau A."/>
            <person name="Hebling U."/>
            <person name="Heumann K."/>
            <person name="Heuss-Neitzel D."/>
            <person name="Hilbert H."/>
            <person name="Hilger F."/>
            <person name="Kleine K."/>
            <person name="Koetter P."/>
            <person name="Louis E.J."/>
            <person name="Messenguy F."/>
            <person name="Mewes H.-W."/>
            <person name="Miosga T."/>
            <person name="Moestl D."/>
            <person name="Mueller-Auer S."/>
            <person name="Nentwich U."/>
            <person name="Obermaier B."/>
            <person name="Piravandi E."/>
            <person name="Pohl T.M."/>
            <person name="Portetelle D."/>
            <person name="Purnelle B."/>
            <person name="Rechmann S."/>
            <person name="Rieger M."/>
            <person name="Rinke M."/>
            <person name="Rose M."/>
            <person name="Scharfe M."/>
            <person name="Scherens B."/>
            <person name="Scholler P."/>
            <person name="Schwager C."/>
            <person name="Schwarz S."/>
            <person name="Underwood A.P."/>
            <person name="Urrestarazu L.A."/>
            <person name="Vandenbol M."/>
            <person name="Verhasselt P."/>
            <person name="Vierendeels F."/>
            <person name="Voet M."/>
            <person name="Volckaert G."/>
            <person name="Voss H."/>
            <person name="Wambutt R."/>
            <person name="Wedler E."/>
            <person name="Wedler H."/>
            <person name="Zimmermann F.K."/>
            <person name="Zollner A."/>
            <person name="Hani J."/>
            <person name="Hoheisel J.D."/>
        </authorList>
    </citation>
    <scope>NUCLEOTIDE SEQUENCE [LARGE SCALE GENOMIC DNA]</scope>
    <source>
        <strain>ATCC 204508 / S288c</strain>
    </source>
</reference>
<reference key="3">
    <citation type="journal article" date="2014" name="G3 (Bethesda)">
        <title>The reference genome sequence of Saccharomyces cerevisiae: Then and now.</title>
        <authorList>
            <person name="Engel S.R."/>
            <person name="Dietrich F.S."/>
            <person name="Fisk D.G."/>
            <person name="Binkley G."/>
            <person name="Balakrishnan R."/>
            <person name="Costanzo M.C."/>
            <person name="Dwight S.S."/>
            <person name="Hitz B.C."/>
            <person name="Karra K."/>
            <person name="Nash R.S."/>
            <person name="Weng S."/>
            <person name="Wong E.D."/>
            <person name="Lloyd P."/>
            <person name="Skrzypek M.S."/>
            <person name="Miyasato S.R."/>
            <person name="Simison M."/>
            <person name="Cherry J.M."/>
        </authorList>
    </citation>
    <scope>GENOME REANNOTATION</scope>
    <source>
        <strain>ATCC 204508 / S288c</strain>
    </source>
</reference>
<reference key="4">
    <citation type="journal article" date="1986" name="Nucleic Acids Res.">
        <title>The ILV5 gene of Saccharomyces cerevisiae is highly expressed.</title>
        <authorList>
            <person name="Petersen J.G.L."/>
            <person name="Holmberg S."/>
        </authorList>
    </citation>
    <scope>NUCLEOTIDE SEQUENCE [GENOMIC DNA] OF 1-97</scope>
</reference>
<reference key="5">
    <citation type="submission" date="1994-12" db="EMBL/GenBank/DDBJ databases">
        <authorList>
            <person name="Harkins H.A."/>
            <person name="Pringle J.R."/>
        </authorList>
    </citation>
    <scope>NUCLEOTIDE SEQUENCE [GENOMIC DNA] OF 263-335</scope>
</reference>
<reference key="6">
    <citation type="journal article" date="1993" name="Yeast">
        <title>Lysine144 is essential for the catalytic activity of Saccharomyces cerevisiae transaldolase.</title>
        <authorList>
            <person name="Miosga T."/>
            <person name="Schaaff-Gerstenschlaeger I."/>
            <person name="Franken E."/>
            <person name="Zimmermann F.K."/>
        </authorList>
    </citation>
    <scope>CATALYTIC ACTIVITY</scope>
    <scope>ACTIVE SITE</scope>
</reference>
<reference key="7">
    <citation type="journal article" date="1997" name="Electrophoresis">
        <title>Proteome studies of Saccharomyces cerevisiae: identification and characterization of abundant proteins.</title>
        <authorList>
            <person name="Garrels J.I."/>
            <person name="McLaughlin C.S."/>
            <person name="Warner J.R."/>
            <person name="Futcher B."/>
            <person name="Latter G.I."/>
            <person name="Kobayashi R."/>
            <person name="Schwender B."/>
            <person name="Volpe T."/>
            <person name="Anderson D.S."/>
            <person name="Mesquita-Fuentes R."/>
            <person name="Payne W.E."/>
        </authorList>
    </citation>
    <scope>ACETYLATION AT SER-2</scope>
</reference>
<reference key="8">
    <citation type="journal article" date="2003" name="Nature">
        <title>Global analysis of protein expression in yeast.</title>
        <authorList>
            <person name="Ghaemmaghami S."/>
            <person name="Huh W.-K."/>
            <person name="Bower K."/>
            <person name="Howson R.W."/>
            <person name="Belle A."/>
            <person name="Dephoure N."/>
            <person name="O'Shea E.K."/>
            <person name="Weissman J.S."/>
        </authorList>
    </citation>
    <scope>LEVEL OF PROTEIN EXPRESSION [LARGE SCALE ANALYSIS]</scope>
</reference>
<keyword id="KW-0007">Acetylation</keyword>
<keyword id="KW-0570">Pentose shunt</keyword>
<keyword id="KW-1185">Reference proteome</keyword>
<keyword id="KW-0704">Schiff base</keyword>
<keyword id="KW-0808">Transferase</keyword>
<protein>
    <recommendedName>
        <fullName>Transaldolase</fullName>
        <ecNumber evidence="2 3">2.2.1.2</ecNumber>
    </recommendedName>
</protein>
<gene>
    <name type="primary">TAL1</name>
    <name type="ordered locus">YLR354C</name>
    <name type="ORF">L9638.6</name>
</gene>